<keyword id="KW-0997">Cell inner membrane</keyword>
<keyword id="KW-1003">Cell membrane</keyword>
<keyword id="KW-0407">Ion channel</keyword>
<keyword id="KW-0406">Ion transport</keyword>
<keyword id="KW-0472">Membrane</keyword>
<keyword id="KW-0812">Transmembrane</keyword>
<keyword id="KW-1133">Transmembrane helix</keyword>
<keyword id="KW-0813">Transport</keyword>
<name>MSCL_BURM7</name>
<protein>
    <recommendedName>
        <fullName evidence="1">Large-conductance mechanosensitive channel</fullName>
    </recommendedName>
</protein>
<proteinExistence type="inferred from homology"/>
<reference key="1">
    <citation type="journal article" date="2010" name="Genome Biol. Evol.">
        <title>Continuing evolution of Burkholderia mallei through genome reduction and large-scale rearrangements.</title>
        <authorList>
            <person name="Losada L."/>
            <person name="Ronning C.M."/>
            <person name="DeShazer D."/>
            <person name="Woods D."/>
            <person name="Fedorova N."/>
            <person name="Kim H.S."/>
            <person name="Shabalina S.A."/>
            <person name="Pearson T.R."/>
            <person name="Brinkac L."/>
            <person name="Tan P."/>
            <person name="Nandi T."/>
            <person name="Crabtree J."/>
            <person name="Badger J."/>
            <person name="Beckstrom-Sternberg S."/>
            <person name="Saqib M."/>
            <person name="Schutzer S.E."/>
            <person name="Keim P."/>
            <person name="Nierman W.C."/>
        </authorList>
    </citation>
    <scope>NUCLEOTIDE SEQUENCE [LARGE SCALE GENOMIC DNA]</scope>
    <source>
        <strain>NCTC 10247</strain>
    </source>
</reference>
<comment type="function">
    <text evidence="1">Channel that opens in response to stretch forces in the membrane lipid bilayer. May participate in the regulation of osmotic pressure changes within the cell.</text>
</comment>
<comment type="subunit">
    <text evidence="1">Homopentamer.</text>
</comment>
<comment type="subcellular location">
    <subcellularLocation>
        <location evidence="1">Cell inner membrane</location>
        <topology evidence="1">Multi-pass membrane protein</topology>
    </subcellularLocation>
</comment>
<comment type="similarity">
    <text evidence="1">Belongs to the MscL family.</text>
</comment>
<gene>
    <name evidence="1" type="primary">mscL</name>
    <name type="ordered locus">BMA10247_1272</name>
</gene>
<sequence length="143" mass="15578">MSIIKEFKEFAVKGNVMDLAIGVIIGGAFSKIVDSVVKDLIMPVIGVLTGGLDFSNKFVLLGQIPASFKGNPESFKDLQAAGVATFGYGSFITVLINFIILAFIIFLMVKFINKLRKPEEAAPAATPEDVLLLREIRDSLKQR</sequence>
<organism>
    <name type="scientific">Burkholderia mallei (strain NCTC 10247)</name>
    <dbReference type="NCBI Taxonomy" id="320389"/>
    <lineage>
        <taxon>Bacteria</taxon>
        <taxon>Pseudomonadati</taxon>
        <taxon>Pseudomonadota</taxon>
        <taxon>Betaproteobacteria</taxon>
        <taxon>Burkholderiales</taxon>
        <taxon>Burkholderiaceae</taxon>
        <taxon>Burkholderia</taxon>
        <taxon>pseudomallei group</taxon>
    </lineage>
</organism>
<evidence type="ECO:0000255" key="1">
    <source>
        <dbReference type="HAMAP-Rule" id="MF_00115"/>
    </source>
</evidence>
<accession>A3MKN7</accession>
<dbReference type="EMBL" id="CP000548">
    <property type="protein sequence ID" value="ABO04211.1"/>
    <property type="molecule type" value="Genomic_DNA"/>
</dbReference>
<dbReference type="RefSeq" id="WP_004192898.1">
    <property type="nucleotide sequence ID" value="NZ_CP007802.1"/>
</dbReference>
<dbReference type="SMR" id="A3MKN7"/>
<dbReference type="GeneID" id="93060637"/>
<dbReference type="KEGG" id="bmaz:BM44_1849"/>
<dbReference type="KEGG" id="bmn:BMA10247_1272"/>
<dbReference type="PATRIC" id="fig|320389.8.peg.2071"/>
<dbReference type="GO" id="GO:0005886">
    <property type="term" value="C:plasma membrane"/>
    <property type="evidence" value="ECO:0007669"/>
    <property type="project" value="UniProtKB-SubCell"/>
</dbReference>
<dbReference type="GO" id="GO:0008381">
    <property type="term" value="F:mechanosensitive monoatomic ion channel activity"/>
    <property type="evidence" value="ECO:0007669"/>
    <property type="project" value="UniProtKB-UniRule"/>
</dbReference>
<dbReference type="Gene3D" id="1.10.1200.120">
    <property type="entry name" value="Large-conductance mechanosensitive channel, MscL, domain 1"/>
    <property type="match status" value="1"/>
</dbReference>
<dbReference type="HAMAP" id="MF_00115">
    <property type="entry name" value="MscL"/>
    <property type="match status" value="1"/>
</dbReference>
<dbReference type="InterPro" id="IPR019823">
    <property type="entry name" value="Mechanosensitive_channel_CS"/>
</dbReference>
<dbReference type="InterPro" id="IPR001185">
    <property type="entry name" value="MS_channel"/>
</dbReference>
<dbReference type="InterPro" id="IPR037673">
    <property type="entry name" value="MSC/AndL"/>
</dbReference>
<dbReference type="InterPro" id="IPR036019">
    <property type="entry name" value="MscL_channel"/>
</dbReference>
<dbReference type="NCBIfam" id="TIGR00220">
    <property type="entry name" value="mscL"/>
    <property type="match status" value="1"/>
</dbReference>
<dbReference type="NCBIfam" id="NF001843">
    <property type="entry name" value="PRK00567.1-4"/>
    <property type="match status" value="1"/>
</dbReference>
<dbReference type="NCBIfam" id="NF010557">
    <property type="entry name" value="PRK13952.1"/>
    <property type="match status" value="1"/>
</dbReference>
<dbReference type="PANTHER" id="PTHR30266:SF2">
    <property type="entry name" value="LARGE-CONDUCTANCE MECHANOSENSITIVE CHANNEL"/>
    <property type="match status" value="1"/>
</dbReference>
<dbReference type="PANTHER" id="PTHR30266">
    <property type="entry name" value="MECHANOSENSITIVE CHANNEL MSCL"/>
    <property type="match status" value="1"/>
</dbReference>
<dbReference type="Pfam" id="PF01741">
    <property type="entry name" value="MscL"/>
    <property type="match status" value="1"/>
</dbReference>
<dbReference type="PRINTS" id="PR01264">
    <property type="entry name" value="MECHCHANNEL"/>
</dbReference>
<dbReference type="SUPFAM" id="SSF81330">
    <property type="entry name" value="Gated mechanosensitive channel"/>
    <property type="match status" value="1"/>
</dbReference>
<dbReference type="PROSITE" id="PS01327">
    <property type="entry name" value="MSCL"/>
    <property type="match status" value="1"/>
</dbReference>
<feature type="chain" id="PRO_1000015360" description="Large-conductance mechanosensitive channel">
    <location>
        <begin position="1"/>
        <end position="143"/>
    </location>
</feature>
<feature type="transmembrane region" description="Helical" evidence="1">
    <location>
        <begin position="10"/>
        <end position="30"/>
    </location>
</feature>
<feature type="transmembrane region" description="Helical" evidence="1">
    <location>
        <begin position="89"/>
        <end position="109"/>
    </location>
</feature>